<keyword id="KW-0028">Amino-acid biosynthesis</keyword>
<keyword id="KW-0057">Aromatic amino acid biosynthesis</keyword>
<keyword id="KW-0456">Lyase</keyword>
<keyword id="KW-0822">Tryptophan biosynthesis</keyword>
<accession>O68906</accession>
<sequence length="271" mass="27805">MTVKQSEASRLGPIFDVCRDDGRAALIGYLPTGYPDVTTSVHAMVALVESGCDIVEVGVPYSDPGMDGPTIVKATEAALHGGVRVRDTLAAVEAISAAGGHAVVMTYWNPVLRYGIDAFARDLASAGGYGLITPDLIPDEAGQWLAASEEHRLDRIFLVAPSSTPQRLAMTVEASRGFVYAASTMGVTGARDVVSNAAPELVGRVKEISDIPVGVGLGVRSGEQAAQIGGYADGVIVGSALVSALGDGGLTALRALTEELAAGVRQRAAAS</sequence>
<gene>
    <name evidence="1" type="primary">trpA</name>
</gene>
<reference key="1">
    <citation type="submission" date="1998-04" db="EMBL/GenBank/DDBJ databases">
        <title>Nucleotide sequence and functional analysis of the tryptophan synthase genes of Mycobacterium intracellulare.</title>
        <authorList>
            <person name="Alavi M.R."/>
            <person name="Rouse D.A."/>
            <person name="Morris S.L."/>
        </authorList>
    </citation>
    <scope>NUCLEOTIDE SEQUENCE [GENOMIC DNA]</scope>
    <source>
        <strain>Batty</strain>
    </source>
</reference>
<name>TRPA_MYCIT</name>
<evidence type="ECO:0000255" key="1">
    <source>
        <dbReference type="HAMAP-Rule" id="MF_00131"/>
    </source>
</evidence>
<proteinExistence type="inferred from homology"/>
<organism>
    <name type="scientific">Mycobacterium intracellulare</name>
    <dbReference type="NCBI Taxonomy" id="1767"/>
    <lineage>
        <taxon>Bacteria</taxon>
        <taxon>Bacillati</taxon>
        <taxon>Actinomycetota</taxon>
        <taxon>Actinomycetes</taxon>
        <taxon>Mycobacteriales</taxon>
        <taxon>Mycobacteriaceae</taxon>
        <taxon>Mycobacterium</taxon>
        <taxon>Mycobacterium avium complex (MAC)</taxon>
    </lineage>
</organism>
<comment type="function">
    <text evidence="1">The alpha subunit is responsible for the aldol cleavage of indoleglycerol phosphate to indole and glyceraldehyde 3-phosphate.</text>
</comment>
<comment type="catalytic activity">
    <reaction evidence="1">
        <text>(1S,2R)-1-C-(indol-3-yl)glycerol 3-phosphate + L-serine = D-glyceraldehyde 3-phosphate + L-tryptophan + H2O</text>
        <dbReference type="Rhea" id="RHEA:10532"/>
        <dbReference type="ChEBI" id="CHEBI:15377"/>
        <dbReference type="ChEBI" id="CHEBI:33384"/>
        <dbReference type="ChEBI" id="CHEBI:57912"/>
        <dbReference type="ChEBI" id="CHEBI:58866"/>
        <dbReference type="ChEBI" id="CHEBI:59776"/>
        <dbReference type="EC" id="4.2.1.20"/>
    </reaction>
</comment>
<comment type="pathway">
    <text evidence="1">Amino-acid biosynthesis; L-tryptophan biosynthesis; L-tryptophan from chorismate: step 5/5.</text>
</comment>
<comment type="subunit">
    <text evidence="1">Tetramer of two alpha and two beta chains.</text>
</comment>
<comment type="similarity">
    <text evidence="1">Belongs to the TrpA family.</text>
</comment>
<feature type="chain" id="PRO_0000098808" description="Tryptophan synthase alpha chain">
    <location>
        <begin position="1"/>
        <end position="271"/>
    </location>
</feature>
<feature type="active site" description="Proton acceptor" evidence="1">
    <location>
        <position position="56"/>
    </location>
</feature>
<feature type="active site" description="Proton acceptor" evidence="1">
    <location>
        <position position="67"/>
    </location>
</feature>
<protein>
    <recommendedName>
        <fullName evidence="1">Tryptophan synthase alpha chain</fullName>
        <ecNumber evidence="1">4.2.1.20</ecNumber>
    </recommendedName>
</protein>
<dbReference type="EC" id="4.2.1.20" evidence="1"/>
<dbReference type="EMBL" id="AF057042">
    <property type="protein sequence ID" value="AAC17135.1"/>
    <property type="molecule type" value="Genomic_DNA"/>
</dbReference>
<dbReference type="RefSeq" id="WP_014380358.1">
    <property type="nucleotide sequence ID" value="NZ_NSFE01000013.1"/>
</dbReference>
<dbReference type="SMR" id="O68906"/>
<dbReference type="GeneID" id="77301487"/>
<dbReference type="OMA" id="LVMTYWN"/>
<dbReference type="UniPathway" id="UPA00035">
    <property type="reaction ID" value="UER00044"/>
</dbReference>
<dbReference type="GO" id="GO:0005829">
    <property type="term" value="C:cytosol"/>
    <property type="evidence" value="ECO:0007669"/>
    <property type="project" value="TreeGrafter"/>
</dbReference>
<dbReference type="GO" id="GO:0004834">
    <property type="term" value="F:tryptophan synthase activity"/>
    <property type="evidence" value="ECO:0007669"/>
    <property type="project" value="UniProtKB-UniRule"/>
</dbReference>
<dbReference type="CDD" id="cd04724">
    <property type="entry name" value="Tryptophan_synthase_alpha"/>
    <property type="match status" value="1"/>
</dbReference>
<dbReference type="FunFam" id="3.20.20.70:FF:000037">
    <property type="entry name" value="Tryptophan synthase alpha chain"/>
    <property type="match status" value="1"/>
</dbReference>
<dbReference type="Gene3D" id="3.20.20.70">
    <property type="entry name" value="Aldolase class I"/>
    <property type="match status" value="1"/>
</dbReference>
<dbReference type="HAMAP" id="MF_00131">
    <property type="entry name" value="Trp_synth_alpha"/>
    <property type="match status" value="1"/>
</dbReference>
<dbReference type="InterPro" id="IPR013785">
    <property type="entry name" value="Aldolase_TIM"/>
</dbReference>
<dbReference type="InterPro" id="IPR011060">
    <property type="entry name" value="RibuloseP-bd_barrel"/>
</dbReference>
<dbReference type="InterPro" id="IPR018204">
    <property type="entry name" value="Trp_synthase_alpha_AS"/>
</dbReference>
<dbReference type="InterPro" id="IPR002028">
    <property type="entry name" value="Trp_synthase_suA"/>
</dbReference>
<dbReference type="NCBIfam" id="TIGR00262">
    <property type="entry name" value="trpA"/>
    <property type="match status" value="1"/>
</dbReference>
<dbReference type="PANTHER" id="PTHR43406:SF1">
    <property type="entry name" value="TRYPTOPHAN SYNTHASE ALPHA CHAIN, CHLOROPLASTIC"/>
    <property type="match status" value="1"/>
</dbReference>
<dbReference type="PANTHER" id="PTHR43406">
    <property type="entry name" value="TRYPTOPHAN SYNTHASE, ALPHA CHAIN"/>
    <property type="match status" value="1"/>
</dbReference>
<dbReference type="Pfam" id="PF00290">
    <property type="entry name" value="Trp_syntA"/>
    <property type="match status" value="1"/>
</dbReference>
<dbReference type="SUPFAM" id="SSF51366">
    <property type="entry name" value="Ribulose-phoshate binding barrel"/>
    <property type="match status" value="1"/>
</dbReference>
<dbReference type="PROSITE" id="PS00167">
    <property type="entry name" value="TRP_SYNTHASE_ALPHA"/>
    <property type="match status" value="1"/>
</dbReference>